<evidence type="ECO:0000250" key="1"/>
<evidence type="ECO:0000305" key="2"/>
<feature type="propeptide" id="PRO_0000345104" evidence="1">
    <location>
        <begin position="1" status="less than"/>
        <end position="4"/>
    </location>
</feature>
<feature type="peptide" id="PRO_0000345105" description="Omega-conotoxin-like S6.7">
    <location>
        <begin position="5"/>
        <end position="37"/>
    </location>
</feature>
<feature type="disulfide bond" evidence="1">
    <location>
        <begin position="5"/>
        <end position="20"/>
    </location>
</feature>
<feature type="disulfide bond" evidence="1">
    <location>
        <begin position="12"/>
        <end position="23"/>
    </location>
</feature>
<feature type="disulfide bond" evidence="1">
    <location>
        <begin position="19"/>
        <end position="32"/>
    </location>
</feature>
<feature type="non-terminal residue">
    <location>
        <position position="1"/>
    </location>
</feature>
<dbReference type="ConoServer" id="3545">
    <property type="toxin name" value="S6.7 precursor"/>
</dbReference>
<dbReference type="GO" id="GO:0005576">
    <property type="term" value="C:extracellular region"/>
    <property type="evidence" value="ECO:0007669"/>
    <property type="project" value="UniProtKB-SubCell"/>
</dbReference>
<dbReference type="GO" id="GO:0044231">
    <property type="term" value="C:host cell presynaptic membrane"/>
    <property type="evidence" value="ECO:0007669"/>
    <property type="project" value="UniProtKB-KW"/>
</dbReference>
<dbReference type="GO" id="GO:0005246">
    <property type="term" value="F:calcium channel regulator activity"/>
    <property type="evidence" value="ECO:0007669"/>
    <property type="project" value="UniProtKB-KW"/>
</dbReference>
<dbReference type="GO" id="GO:0090729">
    <property type="term" value="F:toxin activity"/>
    <property type="evidence" value="ECO:0007669"/>
    <property type="project" value="UniProtKB-KW"/>
</dbReference>
<reference key="1">
    <citation type="journal article" date="2006" name="Biochimie">
        <title>Analysis of expressed sequence tags from the venom ducts of Conus striatus: focusing on the expression profile of conotoxins.</title>
        <authorList>
            <person name="Pi C."/>
            <person name="Liu Y."/>
            <person name="Peng C."/>
            <person name="Jiang X."/>
            <person name="Liu J."/>
            <person name="Xu B."/>
            <person name="Yu X."/>
            <person name="Yu Y."/>
            <person name="Jiang X."/>
            <person name="Wang L."/>
            <person name="Dong M."/>
            <person name="Chen S."/>
            <person name="Xu A.-L."/>
        </authorList>
    </citation>
    <scope>NUCLEOTIDE SEQUENCE [MRNA]</scope>
    <source>
        <tissue>Venom duct</tissue>
    </source>
</reference>
<comment type="function">
    <text evidence="1">Omega-conotoxins act at presynaptic membranes, they bind and block voltage-gated calcium channels (Cav). This toxin blocks N-, P- and Q-type calcium channels (By similarity).</text>
</comment>
<comment type="subcellular location">
    <subcellularLocation>
        <location evidence="1">Secreted</location>
    </subcellularLocation>
</comment>
<comment type="tissue specificity">
    <text>Expressed by the venom duct.</text>
</comment>
<comment type="domain">
    <text evidence="1">The presence of a 'disulfide through disulfide knot' structurally defines this protein as a knottin.</text>
</comment>
<comment type="domain">
    <text>The cysteine framework is VI/VII (C-C-CC-C-C).</text>
</comment>
<comment type="similarity">
    <text evidence="2">Belongs to the conotoxin O1 superfamily.</text>
</comment>
<name>O167_CONST</name>
<protein>
    <recommendedName>
        <fullName>Omega-conotoxin-like S6.7</fullName>
    </recommendedName>
</protein>
<proteinExistence type="evidence at transcript level"/>
<keyword id="KW-0027">Amidation</keyword>
<keyword id="KW-0108">Calcium channel impairing toxin</keyword>
<keyword id="KW-1015">Disulfide bond</keyword>
<keyword id="KW-0872">Ion channel impairing toxin</keyword>
<keyword id="KW-0960">Knottin</keyword>
<keyword id="KW-0528">Neurotoxin</keyword>
<keyword id="KW-0638">Presynaptic neurotoxin</keyword>
<keyword id="KW-0964">Secreted</keyword>
<keyword id="KW-0800">Toxin</keyword>
<keyword id="KW-1218">Voltage-gated calcium channel impairing toxin</keyword>
<accession>P0C832</accession>
<sequence>KSTSCMEAGSYCGSTTRICCGYCAYSASKNVCDYPSN</sequence>
<organism>
    <name type="scientific">Conus striatus</name>
    <name type="common">Striated cone</name>
    <dbReference type="NCBI Taxonomy" id="6493"/>
    <lineage>
        <taxon>Eukaryota</taxon>
        <taxon>Metazoa</taxon>
        <taxon>Spiralia</taxon>
        <taxon>Lophotrochozoa</taxon>
        <taxon>Mollusca</taxon>
        <taxon>Gastropoda</taxon>
        <taxon>Caenogastropoda</taxon>
        <taxon>Neogastropoda</taxon>
        <taxon>Conoidea</taxon>
        <taxon>Conidae</taxon>
        <taxon>Conus</taxon>
        <taxon>Pionoconus</taxon>
    </lineage>
</organism>